<proteinExistence type="evidence at protein level"/>
<name>FTMT_MOUSE</name>
<gene>
    <name evidence="7" type="primary">Ftmt</name>
</gene>
<reference key="1">
    <citation type="journal article" date="2005" name="Science">
        <title>The transcriptional landscape of the mammalian genome.</title>
        <authorList>
            <person name="Carninci P."/>
            <person name="Kasukawa T."/>
            <person name="Katayama S."/>
            <person name="Gough J."/>
            <person name="Frith M.C."/>
            <person name="Maeda N."/>
            <person name="Oyama R."/>
            <person name="Ravasi T."/>
            <person name="Lenhard B."/>
            <person name="Wells C."/>
            <person name="Kodzius R."/>
            <person name="Shimokawa K."/>
            <person name="Bajic V.B."/>
            <person name="Brenner S.E."/>
            <person name="Batalov S."/>
            <person name="Forrest A.R."/>
            <person name="Zavolan M."/>
            <person name="Davis M.J."/>
            <person name="Wilming L.G."/>
            <person name="Aidinis V."/>
            <person name="Allen J.E."/>
            <person name="Ambesi-Impiombato A."/>
            <person name="Apweiler R."/>
            <person name="Aturaliya R.N."/>
            <person name="Bailey T.L."/>
            <person name="Bansal M."/>
            <person name="Baxter L."/>
            <person name="Beisel K.W."/>
            <person name="Bersano T."/>
            <person name="Bono H."/>
            <person name="Chalk A.M."/>
            <person name="Chiu K.P."/>
            <person name="Choudhary V."/>
            <person name="Christoffels A."/>
            <person name="Clutterbuck D.R."/>
            <person name="Crowe M.L."/>
            <person name="Dalla E."/>
            <person name="Dalrymple B.P."/>
            <person name="de Bono B."/>
            <person name="Della Gatta G."/>
            <person name="di Bernardo D."/>
            <person name="Down T."/>
            <person name="Engstrom P."/>
            <person name="Fagiolini M."/>
            <person name="Faulkner G."/>
            <person name="Fletcher C.F."/>
            <person name="Fukushima T."/>
            <person name="Furuno M."/>
            <person name="Futaki S."/>
            <person name="Gariboldi M."/>
            <person name="Georgii-Hemming P."/>
            <person name="Gingeras T.R."/>
            <person name="Gojobori T."/>
            <person name="Green R.E."/>
            <person name="Gustincich S."/>
            <person name="Harbers M."/>
            <person name="Hayashi Y."/>
            <person name="Hensch T.K."/>
            <person name="Hirokawa N."/>
            <person name="Hill D."/>
            <person name="Huminiecki L."/>
            <person name="Iacono M."/>
            <person name="Ikeo K."/>
            <person name="Iwama A."/>
            <person name="Ishikawa T."/>
            <person name="Jakt M."/>
            <person name="Kanapin A."/>
            <person name="Katoh M."/>
            <person name="Kawasawa Y."/>
            <person name="Kelso J."/>
            <person name="Kitamura H."/>
            <person name="Kitano H."/>
            <person name="Kollias G."/>
            <person name="Krishnan S.P."/>
            <person name="Kruger A."/>
            <person name="Kummerfeld S.K."/>
            <person name="Kurochkin I.V."/>
            <person name="Lareau L.F."/>
            <person name="Lazarevic D."/>
            <person name="Lipovich L."/>
            <person name="Liu J."/>
            <person name="Liuni S."/>
            <person name="McWilliam S."/>
            <person name="Madan Babu M."/>
            <person name="Madera M."/>
            <person name="Marchionni L."/>
            <person name="Matsuda H."/>
            <person name="Matsuzawa S."/>
            <person name="Miki H."/>
            <person name="Mignone F."/>
            <person name="Miyake S."/>
            <person name="Morris K."/>
            <person name="Mottagui-Tabar S."/>
            <person name="Mulder N."/>
            <person name="Nakano N."/>
            <person name="Nakauchi H."/>
            <person name="Ng P."/>
            <person name="Nilsson R."/>
            <person name="Nishiguchi S."/>
            <person name="Nishikawa S."/>
            <person name="Nori F."/>
            <person name="Ohara O."/>
            <person name="Okazaki Y."/>
            <person name="Orlando V."/>
            <person name="Pang K.C."/>
            <person name="Pavan W.J."/>
            <person name="Pavesi G."/>
            <person name="Pesole G."/>
            <person name="Petrovsky N."/>
            <person name="Piazza S."/>
            <person name="Reed J."/>
            <person name="Reid J.F."/>
            <person name="Ring B.Z."/>
            <person name="Ringwald M."/>
            <person name="Rost B."/>
            <person name="Ruan Y."/>
            <person name="Salzberg S.L."/>
            <person name="Sandelin A."/>
            <person name="Schneider C."/>
            <person name="Schoenbach C."/>
            <person name="Sekiguchi K."/>
            <person name="Semple C.A."/>
            <person name="Seno S."/>
            <person name="Sessa L."/>
            <person name="Sheng Y."/>
            <person name="Shibata Y."/>
            <person name="Shimada H."/>
            <person name="Shimada K."/>
            <person name="Silva D."/>
            <person name="Sinclair B."/>
            <person name="Sperling S."/>
            <person name="Stupka E."/>
            <person name="Sugiura K."/>
            <person name="Sultana R."/>
            <person name="Takenaka Y."/>
            <person name="Taki K."/>
            <person name="Tammoja K."/>
            <person name="Tan S.L."/>
            <person name="Tang S."/>
            <person name="Taylor M.S."/>
            <person name="Tegner J."/>
            <person name="Teichmann S.A."/>
            <person name="Ueda H.R."/>
            <person name="van Nimwegen E."/>
            <person name="Verardo R."/>
            <person name="Wei C.L."/>
            <person name="Yagi K."/>
            <person name="Yamanishi H."/>
            <person name="Zabarovsky E."/>
            <person name="Zhu S."/>
            <person name="Zimmer A."/>
            <person name="Hide W."/>
            <person name="Bult C."/>
            <person name="Grimmond S.M."/>
            <person name="Teasdale R.D."/>
            <person name="Liu E.T."/>
            <person name="Brusic V."/>
            <person name="Quackenbush J."/>
            <person name="Wahlestedt C."/>
            <person name="Mattick J.S."/>
            <person name="Hume D.A."/>
            <person name="Kai C."/>
            <person name="Sasaki D."/>
            <person name="Tomaru Y."/>
            <person name="Fukuda S."/>
            <person name="Kanamori-Katayama M."/>
            <person name="Suzuki M."/>
            <person name="Aoki J."/>
            <person name="Arakawa T."/>
            <person name="Iida J."/>
            <person name="Imamura K."/>
            <person name="Itoh M."/>
            <person name="Kato T."/>
            <person name="Kawaji H."/>
            <person name="Kawagashira N."/>
            <person name="Kawashima T."/>
            <person name="Kojima M."/>
            <person name="Kondo S."/>
            <person name="Konno H."/>
            <person name="Nakano K."/>
            <person name="Ninomiya N."/>
            <person name="Nishio T."/>
            <person name="Okada M."/>
            <person name="Plessy C."/>
            <person name="Shibata K."/>
            <person name="Shiraki T."/>
            <person name="Suzuki S."/>
            <person name="Tagami M."/>
            <person name="Waki K."/>
            <person name="Watahiki A."/>
            <person name="Okamura-Oho Y."/>
            <person name="Suzuki H."/>
            <person name="Kawai J."/>
            <person name="Hayashizaki Y."/>
        </authorList>
    </citation>
    <scope>NUCLEOTIDE SEQUENCE [LARGE SCALE MRNA]</scope>
    <source>
        <strain>C57BL/6J</strain>
        <tissue>Testis</tissue>
    </source>
</reference>
<reference key="2">
    <citation type="journal article" date="2004" name="Genome Res.">
        <title>The status, quality, and expansion of the NIH full-length cDNA project: the Mammalian Gene Collection (MGC).</title>
        <authorList>
            <consortium name="The MGC Project Team"/>
        </authorList>
    </citation>
    <scope>NUCLEOTIDE SEQUENCE [LARGE SCALE MRNA]</scope>
</reference>
<reference key="3">
    <citation type="journal article" date="2010" name="Cell">
        <title>A tissue-specific atlas of mouse protein phosphorylation and expression.</title>
        <authorList>
            <person name="Huttlin E.L."/>
            <person name="Jedrychowski M.P."/>
            <person name="Elias J.E."/>
            <person name="Goswami T."/>
            <person name="Rad R."/>
            <person name="Beausoleil S.A."/>
            <person name="Villen J."/>
            <person name="Haas W."/>
            <person name="Sowa M.E."/>
            <person name="Gygi S.P."/>
        </authorList>
    </citation>
    <scope>IDENTIFICATION BY MASS SPECTROMETRY [LARGE SCALE ANALYSIS]</scope>
    <source>
        <tissue>Testis</tissue>
    </source>
</reference>
<reference key="4">
    <citation type="journal article" date="2004" name="J. Mol. Biol.">
        <title>Crystal structure and biochemical properties of the human mitochondrial ferritin and its mutant Ser144Ala.</title>
        <authorList>
            <person name="Langlois d'Estaintot B."/>
            <person name="Santambrogio P."/>
            <person name="Granier T."/>
            <person name="Gallois B."/>
            <person name="Chevalier J.M."/>
            <person name="Precigoux G."/>
            <person name="Levi S."/>
            <person name="Arosio P."/>
        </authorList>
    </citation>
    <scope>FUNCTION</scope>
    <scope>CATALYTIC ACTIVITY</scope>
</reference>
<accession>Q9D5H4</accession>
<accession>Q14BZ8</accession>
<accession>Q3V0N6</accession>
<accession>Q9D5F4</accession>
<feature type="transit peptide" description="Mitochondrion" evidence="2">
    <location>
        <begin position="1"/>
        <end position="49"/>
    </location>
</feature>
<feature type="chain" id="PRO_0000008851" description="Ferritin, mitochondrial">
    <location>
        <begin position="50"/>
        <end position="237"/>
    </location>
</feature>
<feature type="domain" description="Ferritin-like diiron" evidence="3">
    <location>
        <begin position="66"/>
        <end position="215"/>
    </location>
</feature>
<feature type="binding site" evidence="1">
    <location>
        <position position="83"/>
    </location>
    <ligand>
        <name>Fe cation</name>
        <dbReference type="ChEBI" id="CHEBI:24875"/>
        <label>1</label>
    </ligand>
</feature>
<feature type="binding site" evidence="1">
    <location>
        <position position="118"/>
    </location>
    <ligand>
        <name>Fe cation</name>
        <dbReference type="ChEBI" id="CHEBI:24875"/>
        <label>1</label>
    </ligand>
</feature>
<feature type="binding site" evidence="1">
    <location>
        <position position="118"/>
    </location>
    <ligand>
        <name>Fe cation</name>
        <dbReference type="ChEBI" id="CHEBI:24875"/>
        <label>2</label>
    </ligand>
</feature>
<feature type="binding site" evidence="1">
    <location>
        <position position="121"/>
    </location>
    <ligand>
        <name>Fe cation</name>
        <dbReference type="ChEBI" id="CHEBI:24875"/>
        <label>1</label>
    </ligand>
</feature>
<feature type="binding site" evidence="1">
    <location>
        <position position="163"/>
    </location>
    <ligand>
        <name>Fe cation</name>
        <dbReference type="ChEBI" id="CHEBI:24875"/>
        <label>2</label>
    </ligand>
</feature>
<feature type="binding site" evidence="1">
    <location>
        <position position="197"/>
    </location>
    <ligand>
        <name>Fe cation</name>
        <dbReference type="ChEBI" id="CHEBI:24875"/>
        <label>2</label>
    </ligand>
</feature>
<feature type="sequence conflict" description="In Ref. 1; BAB29831." evidence="5" ref="1">
    <original>E</original>
    <variation>G</variation>
    <location>
        <position position="163"/>
    </location>
</feature>
<feature type="sequence conflict" description="In Ref. 1; BAB29806." evidence="5" ref="1">
    <original>K</original>
    <variation>R</variation>
    <location>
        <position position="164"/>
    </location>
</feature>
<feature type="sequence conflict" description="In Ref. 1; BAB29806." evidence="5" ref="1">
    <original>N</original>
    <variation>T</variation>
    <location>
        <position position="167"/>
    </location>
</feature>
<dbReference type="EC" id="1.16.3.1" evidence="4"/>
<dbReference type="EMBL" id="AK015346">
    <property type="protein sequence ID" value="BAB29806.1"/>
    <property type="status" value="ALT_INIT"/>
    <property type="molecule type" value="mRNA"/>
</dbReference>
<dbReference type="EMBL" id="AK015400">
    <property type="protein sequence ID" value="BAB29831.1"/>
    <property type="molecule type" value="mRNA"/>
</dbReference>
<dbReference type="EMBL" id="AK133009">
    <property type="protein sequence ID" value="BAE21468.1"/>
    <property type="molecule type" value="mRNA"/>
</dbReference>
<dbReference type="EMBL" id="BC115514">
    <property type="protein sequence ID" value="AAI15515.1"/>
    <property type="molecule type" value="mRNA"/>
</dbReference>
<dbReference type="EMBL" id="BC115515">
    <property type="protein sequence ID" value="AAI15516.1"/>
    <property type="molecule type" value="mRNA"/>
</dbReference>
<dbReference type="CCDS" id="CCDS29246.1"/>
<dbReference type="RefSeq" id="NP_080562.2">
    <property type="nucleotide sequence ID" value="NM_026286.3"/>
</dbReference>
<dbReference type="SMR" id="Q9D5H4"/>
<dbReference type="FunCoup" id="Q9D5H4">
    <property type="interactions" value="357"/>
</dbReference>
<dbReference type="STRING" id="10090.ENSMUSP00000025388"/>
<dbReference type="PaxDb" id="10090-ENSMUSP00000025388"/>
<dbReference type="ProteomicsDB" id="266878"/>
<dbReference type="Antibodypedia" id="52782">
    <property type="antibodies" value="75 antibodies from 20 providers"/>
</dbReference>
<dbReference type="DNASU" id="67634"/>
<dbReference type="Ensembl" id="ENSMUST00000025388.7">
    <property type="protein sequence ID" value="ENSMUSP00000025388.6"/>
    <property type="gene ID" value="ENSMUSG00000024510.7"/>
</dbReference>
<dbReference type="GeneID" id="67634"/>
<dbReference type="KEGG" id="mmu:67634"/>
<dbReference type="UCSC" id="uc008exc.2">
    <property type="organism name" value="mouse"/>
</dbReference>
<dbReference type="AGR" id="MGI:1914884"/>
<dbReference type="CTD" id="94033"/>
<dbReference type="MGI" id="MGI:1914884">
    <property type="gene designation" value="Ftmt"/>
</dbReference>
<dbReference type="VEuPathDB" id="HostDB:ENSMUSG00000024510"/>
<dbReference type="eggNOG" id="KOG2332">
    <property type="taxonomic scope" value="Eukaryota"/>
</dbReference>
<dbReference type="GeneTree" id="ENSGT00940000163120"/>
<dbReference type="HOGENOM" id="CLU_065681_4_0_1"/>
<dbReference type="InParanoid" id="Q9D5H4"/>
<dbReference type="OMA" id="WNSAKDA"/>
<dbReference type="OrthoDB" id="186462at2759"/>
<dbReference type="PhylomeDB" id="Q9D5H4"/>
<dbReference type="TreeFam" id="TF313885"/>
<dbReference type="Reactome" id="R-MMU-917937">
    <property type="pathway name" value="Iron uptake and transport"/>
</dbReference>
<dbReference type="BioGRID-ORCS" id="67634">
    <property type="hits" value="1 hit in 77 CRISPR screens"/>
</dbReference>
<dbReference type="PRO" id="PR:Q9D5H4"/>
<dbReference type="Proteomes" id="UP000000589">
    <property type="component" value="Chromosome 18"/>
</dbReference>
<dbReference type="RNAct" id="Q9D5H4">
    <property type="molecule type" value="protein"/>
</dbReference>
<dbReference type="Bgee" id="ENSMUSG00000024510">
    <property type="expression patterns" value="Expressed in seminiferous tubule of testis and 4 other cell types or tissues"/>
</dbReference>
<dbReference type="GO" id="GO:0005739">
    <property type="term" value="C:mitochondrion"/>
    <property type="evidence" value="ECO:0007005"/>
    <property type="project" value="MGI"/>
</dbReference>
<dbReference type="GO" id="GO:0008199">
    <property type="term" value="F:ferric iron binding"/>
    <property type="evidence" value="ECO:0007669"/>
    <property type="project" value="InterPro"/>
</dbReference>
<dbReference type="GO" id="GO:0004322">
    <property type="term" value="F:ferroxidase activity"/>
    <property type="evidence" value="ECO:0000314"/>
    <property type="project" value="UniProtKB"/>
</dbReference>
<dbReference type="GO" id="GO:0005506">
    <property type="term" value="F:iron ion binding"/>
    <property type="evidence" value="ECO:0000304"/>
    <property type="project" value="MGI"/>
</dbReference>
<dbReference type="GO" id="GO:0006879">
    <property type="term" value="P:intracellular iron ion homeostasis"/>
    <property type="evidence" value="ECO:0000250"/>
    <property type="project" value="UniProtKB"/>
</dbReference>
<dbReference type="GO" id="GO:0006826">
    <property type="term" value="P:iron ion transport"/>
    <property type="evidence" value="ECO:0007669"/>
    <property type="project" value="InterPro"/>
</dbReference>
<dbReference type="GO" id="GO:0008284">
    <property type="term" value="P:positive regulation of cell population proliferation"/>
    <property type="evidence" value="ECO:0007669"/>
    <property type="project" value="Ensembl"/>
</dbReference>
<dbReference type="CDD" id="cd01056">
    <property type="entry name" value="Euk_Ferritin"/>
    <property type="match status" value="1"/>
</dbReference>
<dbReference type="FunFam" id="1.20.1260.10:FF:000016">
    <property type="entry name" value="Ferritin heavy chain"/>
    <property type="match status" value="1"/>
</dbReference>
<dbReference type="Gene3D" id="1.20.1260.10">
    <property type="match status" value="1"/>
</dbReference>
<dbReference type="InterPro" id="IPR001519">
    <property type="entry name" value="Ferritin"/>
</dbReference>
<dbReference type="InterPro" id="IPR012347">
    <property type="entry name" value="Ferritin-like"/>
</dbReference>
<dbReference type="InterPro" id="IPR009040">
    <property type="entry name" value="Ferritin-like_diiron"/>
</dbReference>
<dbReference type="InterPro" id="IPR009078">
    <property type="entry name" value="Ferritin-like_SF"/>
</dbReference>
<dbReference type="InterPro" id="IPR014034">
    <property type="entry name" value="Ferritin_CS"/>
</dbReference>
<dbReference type="InterPro" id="IPR008331">
    <property type="entry name" value="Ferritin_DPS_dom"/>
</dbReference>
<dbReference type="PANTHER" id="PTHR11431">
    <property type="entry name" value="FERRITIN"/>
    <property type="match status" value="1"/>
</dbReference>
<dbReference type="PANTHER" id="PTHR11431:SF30">
    <property type="entry name" value="FERRITIN, MITOCHONDRIAL"/>
    <property type="match status" value="1"/>
</dbReference>
<dbReference type="Pfam" id="PF00210">
    <property type="entry name" value="Ferritin"/>
    <property type="match status" value="1"/>
</dbReference>
<dbReference type="SUPFAM" id="SSF47240">
    <property type="entry name" value="Ferritin-like"/>
    <property type="match status" value="1"/>
</dbReference>
<dbReference type="PROSITE" id="PS00540">
    <property type="entry name" value="FERRITIN_1"/>
    <property type="match status" value="1"/>
</dbReference>
<dbReference type="PROSITE" id="PS00204">
    <property type="entry name" value="FERRITIN_2"/>
    <property type="match status" value="1"/>
</dbReference>
<dbReference type="PROSITE" id="PS50905">
    <property type="entry name" value="FERRITIN_LIKE"/>
    <property type="match status" value="1"/>
</dbReference>
<comment type="function">
    <text evidence="4">Catalyzes the oxidation of ferrous iron(II) to ferric iron(III) and stores iron in a soluble, non-toxic, readily available form. Important for iron homeostasis. Iron is taken up in the ferrous form and deposited as ferric hydroxides after oxidation.</text>
</comment>
<comment type="catalytic activity">
    <reaction evidence="4">
        <text>4 Fe(2+) + O2 + 4 H(+) = 4 Fe(3+) + 2 H2O</text>
        <dbReference type="Rhea" id="RHEA:11148"/>
        <dbReference type="ChEBI" id="CHEBI:15377"/>
        <dbReference type="ChEBI" id="CHEBI:15378"/>
        <dbReference type="ChEBI" id="CHEBI:15379"/>
        <dbReference type="ChEBI" id="CHEBI:29033"/>
        <dbReference type="ChEBI" id="CHEBI:29034"/>
        <dbReference type="EC" id="1.16.3.1"/>
    </reaction>
    <physiologicalReaction direction="left-to-right" evidence="6">
        <dbReference type="Rhea" id="RHEA:11149"/>
    </physiologicalReaction>
</comment>
<comment type="subunit">
    <text evidence="1">Homooligomer of 24 subunits. The functional molecule is roughly spherical and contains a central cavity into which the polymeric mineral iron core is deposited (By similarity).</text>
</comment>
<comment type="subcellular location">
    <subcellularLocation>
        <location evidence="1">Mitochondrion</location>
    </subcellularLocation>
</comment>
<comment type="similarity">
    <text evidence="5">Belongs to the ferritin family.</text>
</comment>
<comment type="sequence caution" evidence="5">
    <conflict type="erroneous initiation">
        <sequence resource="EMBL-CDS" id="BAB29806"/>
    </conflict>
    <text>Extended N-terminus.</text>
</comment>
<organism>
    <name type="scientific">Mus musculus</name>
    <name type="common">Mouse</name>
    <dbReference type="NCBI Taxonomy" id="10090"/>
    <lineage>
        <taxon>Eukaryota</taxon>
        <taxon>Metazoa</taxon>
        <taxon>Chordata</taxon>
        <taxon>Craniata</taxon>
        <taxon>Vertebrata</taxon>
        <taxon>Euteleostomi</taxon>
        <taxon>Mammalia</taxon>
        <taxon>Eutheria</taxon>
        <taxon>Euarchontoglires</taxon>
        <taxon>Glires</taxon>
        <taxon>Rodentia</taxon>
        <taxon>Myomorpha</taxon>
        <taxon>Muroidea</taxon>
        <taxon>Muridae</taxon>
        <taxon>Murinae</taxon>
        <taxon>Mus</taxon>
        <taxon>Mus</taxon>
    </lineage>
</organism>
<protein>
    <recommendedName>
        <fullName evidence="5">Ferritin, mitochondrial</fullName>
        <ecNumber evidence="4">1.16.3.1</ecNumber>
    </recommendedName>
</protein>
<keyword id="KW-0408">Iron</keyword>
<keyword id="KW-0409">Iron storage</keyword>
<keyword id="KW-0479">Metal-binding</keyword>
<keyword id="KW-0496">Mitochondrion</keyword>
<keyword id="KW-0560">Oxidoreductase</keyword>
<keyword id="KW-1185">Reference proteome</keyword>
<keyword id="KW-0809">Transit peptide</keyword>
<sequence length="237" mass="27158">MLSCFWFFSKHISSALMSLPRVLHRFTAPQCLASRYPLGPLLASPRRLLASVASSQDSTRPSRVRQNFHPDSEAAINRQINLELYASYVYLSMAYYFSRDDVALYNFSKYFLRQSLEEREHAEKLMKLQNQRGGRICLQDIKKPDKDDWECGLRAMECALLLEKNVNQSLLDLHTLASEKGDPHLCDFLETHYLHEQVKSIKELGDHVHNLVTMGAPAAGLAEYLFDKHTLGSESKH</sequence>
<evidence type="ECO:0000250" key="1">
    <source>
        <dbReference type="UniProtKB" id="Q8N4E7"/>
    </source>
</evidence>
<evidence type="ECO:0000255" key="2"/>
<evidence type="ECO:0000255" key="3">
    <source>
        <dbReference type="PROSITE-ProRule" id="PRU00085"/>
    </source>
</evidence>
<evidence type="ECO:0000269" key="4">
    <source>
    </source>
</evidence>
<evidence type="ECO:0000305" key="5"/>
<evidence type="ECO:0000305" key="6">
    <source>
    </source>
</evidence>
<evidence type="ECO:0000312" key="7">
    <source>
        <dbReference type="MGI" id="MGI:1914884"/>
    </source>
</evidence>